<dbReference type="EMBL" id="AP005465">
    <property type="protein sequence ID" value="BAC16183.1"/>
    <property type="molecule type" value="Genomic_DNA"/>
</dbReference>
<dbReference type="EMBL" id="AP008213">
    <property type="protein sequence ID" value="BAF21562.1"/>
    <property type="molecule type" value="Genomic_DNA"/>
</dbReference>
<dbReference type="EMBL" id="AP014963">
    <property type="protein sequence ID" value="BAT01504.1"/>
    <property type="molecule type" value="Genomic_DNA"/>
</dbReference>
<dbReference type="EMBL" id="AK072662">
    <property type="protein sequence ID" value="BAG93088.1"/>
    <property type="molecule type" value="mRNA"/>
</dbReference>
<dbReference type="RefSeq" id="XP_015645783.1">
    <property type="nucleotide sequence ID" value="XM_015790297.1"/>
</dbReference>
<dbReference type="SMR" id="Q8H2P8"/>
<dbReference type="FunCoup" id="Q8H2P8">
    <property type="interactions" value="2316"/>
</dbReference>
<dbReference type="STRING" id="39947.Q8H2P8"/>
<dbReference type="PaxDb" id="39947-Q8H2P8"/>
<dbReference type="EnsemblPlants" id="Os07t0484200-01">
    <property type="protein sequence ID" value="Os07t0484200-01"/>
    <property type="gene ID" value="Os07g0484200"/>
</dbReference>
<dbReference type="Gramene" id="Os07t0484200-01">
    <property type="protein sequence ID" value="Os07t0484200-01"/>
    <property type="gene ID" value="Os07g0484200"/>
</dbReference>
<dbReference type="KEGG" id="dosa:Os07g0484200"/>
<dbReference type="eggNOG" id="KOG1735">
    <property type="taxonomic scope" value="Eukaryota"/>
</dbReference>
<dbReference type="HOGENOM" id="CLU_094004_2_2_1"/>
<dbReference type="InParanoid" id="Q8H2P8"/>
<dbReference type="OMA" id="ANCFEEV"/>
<dbReference type="OrthoDB" id="10249245at2759"/>
<dbReference type="Proteomes" id="UP000000763">
    <property type="component" value="Chromosome 7"/>
</dbReference>
<dbReference type="Proteomes" id="UP000059680">
    <property type="component" value="Chromosome 7"/>
</dbReference>
<dbReference type="ExpressionAtlas" id="Q8H2P8">
    <property type="expression patterns" value="baseline and differential"/>
</dbReference>
<dbReference type="GO" id="GO:0015629">
    <property type="term" value="C:actin cytoskeleton"/>
    <property type="evidence" value="ECO:0000318"/>
    <property type="project" value="GO_Central"/>
</dbReference>
<dbReference type="GO" id="GO:0005737">
    <property type="term" value="C:cytoplasm"/>
    <property type="evidence" value="ECO:0000318"/>
    <property type="project" value="GO_Central"/>
</dbReference>
<dbReference type="GO" id="GO:0051015">
    <property type="term" value="F:actin filament binding"/>
    <property type="evidence" value="ECO:0000318"/>
    <property type="project" value="GO_Central"/>
</dbReference>
<dbReference type="GO" id="GO:0030042">
    <property type="term" value="P:actin filament depolymerization"/>
    <property type="evidence" value="ECO:0000318"/>
    <property type="project" value="GO_Central"/>
</dbReference>
<dbReference type="CDD" id="cd11286">
    <property type="entry name" value="ADF_cofilin_like"/>
    <property type="match status" value="1"/>
</dbReference>
<dbReference type="FunFam" id="3.40.20.10:FF:000025">
    <property type="entry name" value="Actin-depolymerizing factor 2"/>
    <property type="match status" value="1"/>
</dbReference>
<dbReference type="Gene3D" id="3.40.20.10">
    <property type="entry name" value="Severin"/>
    <property type="match status" value="1"/>
</dbReference>
<dbReference type="InterPro" id="IPR002108">
    <property type="entry name" value="ADF-H"/>
</dbReference>
<dbReference type="InterPro" id="IPR029006">
    <property type="entry name" value="ADF-H/Gelsolin-like_dom_sf"/>
</dbReference>
<dbReference type="InterPro" id="IPR017904">
    <property type="entry name" value="ADF/Cofilin"/>
</dbReference>
<dbReference type="PANTHER" id="PTHR11913">
    <property type="entry name" value="COFILIN-RELATED"/>
    <property type="match status" value="1"/>
</dbReference>
<dbReference type="Pfam" id="PF00241">
    <property type="entry name" value="Cofilin_ADF"/>
    <property type="match status" value="1"/>
</dbReference>
<dbReference type="SMART" id="SM00102">
    <property type="entry name" value="ADF"/>
    <property type="match status" value="1"/>
</dbReference>
<dbReference type="SUPFAM" id="SSF55753">
    <property type="entry name" value="Actin depolymerizing proteins"/>
    <property type="match status" value="1"/>
</dbReference>
<dbReference type="PROSITE" id="PS51263">
    <property type="entry name" value="ADF_H"/>
    <property type="match status" value="1"/>
</dbReference>
<name>ADF9_ORYSJ</name>
<sequence>MANSASGLAVNDECKFKFQELKTRRGFRFIVFKIDDKAMEIKVERLGQTAEGYEDFAATLPADECRYAVYDLDFVTDENCQKSKIFFFSWSPDTARTRSKMLYASSKDRFRRELDGIQCEIQATDPSEMSLDIIRARAH</sequence>
<feature type="chain" id="PRO_0000278112" description="Actin-depolymerizing factor 9">
    <location>
        <begin position="1"/>
        <end position="139"/>
    </location>
</feature>
<feature type="domain" description="ADF-H" evidence="2">
    <location>
        <begin position="7"/>
        <end position="139"/>
    </location>
</feature>
<protein>
    <recommendedName>
        <fullName>Actin-depolymerizing factor 9</fullName>
        <shortName>ADF-9</shortName>
        <shortName>OsADF9</shortName>
    </recommendedName>
</protein>
<proteinExistence type="evidence at transcript level"/>
<accession>Q8H2P8</accession>
<accession>B7EL41</accession>
<gene>
    <name type="primary">ADF9</name>
    <name type="ordered locus">Os07g0484200</name>
    <name type="ordered locus">LOC_Os07g30090</name>
    <name type="ORF">OJ1136_F08.120</name>
</gene>
<reference key="1">
    <citation type="journal article" date="2005" name="Nature">
        <title>The map-based sequence of the rice genome.</title>
        <authorList>
            <consortium name="International rice genome sequencing project (IRGSP)"/>
        </authorList>
    </citation>
    <scope>NUCLEOTIDE SEQUENCE [LARGE SCALE GENOMIC DNA]</scope>
    <source>
        <strain>cv. Nipponbare</strain>
    </source>
</reference>
<reference key="2">
    <citation type="journal article" date="2008" name="Nucleic Acids Res.">
        <title>The rice annotation project database (RAP-DB): 2008 update.</title>
        <authorList>
            <consortium name="The rice annotation project (RAP)"/>
        </authorList>
    </citation>
    <scope>GENOME REANNOTATION</scope>
    <source>
        <strain>cv. Nipponbare</strain>
    </source>
</reference>
<reference key="3">
    <citation type="journal article" date="2013" name="Rice">
        <title>Improvement of the Oryza sativa Nipponbare reference genome using next generation sequence and optical map data.</title>
        <authorList>
            <person name="Kawahara Y."/>
            <person name="de la Bastide M."/>
            <person name="Hamilton J.P."/>
            <person name="Kanamori H."/>
            <person name="McCombie W.R."/>
            <person name="Ouyang S."/>
            <person name="Schwartz D.C."/>
            <person name="Tanaka T."/>
            <person name="Wu J."/>
            <person name="Zhou S."/>
            <person name="Childs K.L."/>
            <person name="Davidson R.M."/>
            <person name="Lin H."/>
            <person name="Quesada-Ocampo L."/>
            <person name="Vaillancourt B."/>
            <person name="Sakai H."/>
            <person name="Lee S.S."/>
            <person name="Kim J."/>
            <person name="Numa H."/>
            <person name="Itoh T."/>
            <person name="Buell C.R."/>
            <person name="Matsumoto T."/>
        </authorList>
    </citation>
    <scope>GENOME REANNOTATION</scope>
    <source>
        <strain>cv. Nipponbare</strain>
    </source>
</reference>
<reference key="4">
    <citation type="journal article" date="2003" name="Science">
        <title>Collection, mapping, and annotation of over 28,000 cDNA clones from japonica rice.</title>
        <authorList>
            <consortium name="The rice full-length cDNA consortium"/>
        </authorList>
    </citation>
    <scope>NUCLEOTIDE SEQUENCE [LARGE SCALE MRNA]</scope>
    <source>
        <strain>cv. Nipponbare</strain>
    </source>
</reference>
<reference key="5">
    <citation type="journal article" date="2006" name="J. Plant Physiol.">
        <title>Comparative study of rice and Arabidopsis actin-depolymerizing factors gene families.</title>
        <authorList>
            <person name="Feng Y."/>
            <person name="Liu Q."/>
            <person name="Xue Q."/>
        </authorList>
    </citation>
    <scope>GENE FAMILY</scope>
</reference>
<keyword id="KW-0009">Actin-binding</keyword>
<keyword id="KW-1185">Reference proteome</keyword>
<comment type="function">
    <text evidence="1">Actin-depolymerizing protein. Severs actin filaments (F-actin) and binds to actin monomers (By similarity).</text>
</comment>
<comment type="similarity">
    <text evidence="3">Belongs to the actin-binding proteins ADF family.</text>
</comment>
<evidence type="ECO:0000250" key="1"/>
<evidence type="ECO:0000255" key="2">
    <source>
        <dbReference type="PROSITE-ProRule" id="PRU00599"/>
    </source>
</evidence>
<evidence type="ECO:0000305" key="3"/>
<organism>
    <name type="scientific">Oryza sativa subsp. japonica</name>
    <name type="common">Rice</name>
    <dbReference type="NCBI Taxonomy" id="39947"/>
    <lineage>
        <taxon>Eukaryota</taxon>
        <taxon>Viridiplantae</taxon>
        <taxon>Streptophyta</taxon>
        <taxon>Embryophyta</taxon>
        <taxon>Tracheophyta</taxon>
        <taxon>Spermatophyta</taxon>
        <taxon>Magnoliopsida</taxon>
        <taxon>Liliopsida</taxon>
        <taxon>Poales</taxon>
        <taxon>Poaceae</taxon>
        <taxon>BOP clade</taxon>
        <taxon>Oryzoideae</taxon>
        <taxon>Oryzeae</taxon>
        <taxon>Oryzinae</taxon>
        <taxon>Oryza</taxon>
        <taxon>Oryza sativa</taxon>
    </lineage>
</organism>